<accession>Q0C9R3</accession>
<reference key="1">
    <citation type="submission" date="2005-09" db="EMBL/GenBank/DDBJ databases">
        <title>Annotation of the Aspergillus terreus NIH2624 genome.</title>
        <authorList>
            <person name="Birren B.W."/>
            <person name="Lander E.S."/>
            <person name="Galagan J.E."/>
            <person name="Nusbaum C."/>
            <person name="Devon K."/>
            <person name="Henn M."/>
            <person name="Ma L.-J."/>
            <person name="Jaffe D.B."/>
            <person name="Butler J."/>
            <person name="Alvarez P."/>
            <person name="Gnerre S."/>
            <person name="Grabherr M."/>
            <person name="Kleber M."/>
            <person name="Mauceli E.W."/>
            <person name="Brockman W."/>
            <person name="Rounsley S."/>
            <person name="Young S.K."/>
            <person name="LaButti K."/>
            <person name="Pushparaj V."/>
            <person name="DeCaprio D."/>
            <person name="Crawford M."/>
            <person name="Koehrsen M."/>
            <person name="Engels R."/>
            <person name="Montgomery P."/>
            <person name="Pearson M."/>
            <person name="Howarth C."/>
            <person name="Larson L."/>
            <person name="Luoma S."/>
            <person name="White J."/>
            <person name="Alvarado L."/>
            <person name="Kodira C.D."/>
            <person name="Zeng Q."/>
            <person name="Oleary S."/>
            <person name="Yandava C."/>
            <person name="Denning D.W."/>
            <person name="Nierman W.C."/>
            <person name="Milne T."/>
            <person name="Madden K."/>
        </authorList>
    </citation>
    <scope>NUCLEOTIDE SEQUENCE [LARGE SCALE GENOMIC DNA]</scope>
    <source>
        <strain>NIH 2624 / FGSC A1156</strain>
    </source>
</reference>
<proteinExistence type="inferred from homology"/>
<gene>
    <name type="primary">cgi121</name>
    <name type="ORF">ATEG_09571</name>
</gene>
<feature type="chain" id="PRO_0000279207" description="EKC/KEOPS complex subunit cgi121">
    <location>
        <begin position="1"/>
        <end position="195"/>
    </location>
</feature>
<protein>
    <recommendedName>
        <fullName>EKC/KEOPS complex subunit cgi121</fullName>
    </recommendedName>
</protein>
<comment type="function">
    <text evidence="1">Component of the EKC/KEOPS complex that is required for the formation of a threonylcarbamoyl group on adenosine at position 37 (t(6)A37) in tRNAs that read codons beginning with adenine. The complex is probably involved in the transfer of the threonylcarbamoyl moiety of threonylcarbamoyl-AMP (TC-AMP) to the n6 group of a37. Cgi121 acts as an allosteric effector that regulates the t(6)A activity of the complex. The EKC/KEOPS complex also promotes both telomere uncapping and telomere elongation. The complex is required for efficient recruitment of transcriptional coactivators. Cgi121 is not required for tRNA modification (By similarity).</text>
</comment>
<comment type="subunit">
    <text evidence="1">Component of the EKC/KEOPS complex composed of at least bud32, cgi121, gon7, kae1 and pcc1; the whole complex dimerizes.</text>
</comment>
<comment type="subcellular location">
    <subcellularLocation>
        <location evidence="1">Nucleus</location>
    </subcellularLocation>
    <subcellularLocation>
        <location evidence="1">Chromosome</location>
        <location evidence="1">Telomere</location>
    </subcellularLocation>
</comment>
<comment type="similarity">
    <text evidence="2">Belongs to the CGI121/TPRKB family.</text>
</comment>
<comment type="sequence caution" evidence="2">
    <conflict type="erroneous gene model prediction">
        <sequence resource="EMBL-CDS" id="EAU29762"/>
    </conflict>
</comment>
<dbReference type="EMBL" id="CH476608">
    <property type="protein sequence ID" value="EAU29762.1"/>
    <property type="status" value="ALT_SEQ"/>
    <property type="molecule type" value="Genomic_DNA"/>
</dbReference>
<dbReference type="RefSeq" id="XP_001218193.1">
    <property type="nucleotide sequence ID" value="XM_001218192.1"/>
</dbReference>
<dbReference type="SMR" id="Q0C9R3"/>
<dbReference type="STRING" id="341663.Q0C9R3"/>
<dbReference type="GeneID" id="4354380"/>
<dbReference type="OrthoDB" id="329139at2759"/>
<dbReference type="Proteomes" id="UP000007963">
    <property type="component" value="Unassembled WGS sequence"/>
</dbReference>
<dbReference type="GO" id="GO:0000781">
    <property type="term" value="C:chromosome, telomeric region"/>
    <property type="evidence" value="ECO:0007669"/>
    <property type="project" value="UniProtKB-SubCell"/>
</dbReference>
<dbReference type="GO" id="GO:0005829">
    <property type="term" value="C:cytosol"/>
    <property type="evidence" value="ECO:0007669"/>
    <property type="project" value="TreeGrafter"/>
</dbReference>
<dbReference type="GO" id="GO:0000408">
    <property type="term" value="C:EKC/KEOPS complex"/>
    <property type="evidence" value="ECO:0007669"/>
    <property type="project" value="TreeGrafter"/>
</dbReference>
<dbReference type="GO" id="GO:0005634">
    <property type="term" value="C:nucleus"/>
    <property type="evidence" value="ECO:0007669"/>
    <property type="project" value="UniProtKB-SubCell"/>
</dbReference>
<dbReference type="GO" id="GO:0002949">
    <property type="term" value="P:tRNA threonylcarbamoyladenosine modification"/>
    <property type="evidence" value="ECO:0007669"/>
    <property type="project" value="TreeGrafter"/>
</dbReference>
<dbReference type="Gene3D" id="3.30.2380.10">
    <property type="entry name" value="CGI121/TPRKB"/>
    <property type="match status" value="1"/>
</dbReference>
<dbReference type="InterPro" id="IPR013926">
    <property type="entry name" value="CGI121/TPRKB"/>
</dbReference>
<dbReference type="InterPro" id="IPR036504">
    <property type="entry name" value="CGI121/TPRKB_sf"/>
</dbReference>
<dbReference type="PANTHER" id="PTHR15840">
    <property type="entry name" value="CGI-121 FAMILY MEMBER"/>
    <property type="match status" value="1"/>
</dbReference>
<dbReference type="PANTHER" id="PTHR15840:SF10">
    <property type="entry name" value="EKC_KEOPS COMPLEX SUBUNIT TPRKB"/>
    <property type="match status" value="1"/>
</dbReference>
<dbReference type="Pfam" id="PF08617">
    <property type="entry name" value="CGI-121"/>
    <property type="match status" value="1"/>
</dbReference>
<dbReference type="SUPFAM" id="SSF143870">
    <property type="entry name" value="PF0523-like"/>
    <property type="match status" value="1"/>
</dbReference>
<evidence type="ECO:0000250" key="1"/>
<evidence type="ECO:0000305" key="2"/>
<name>CG121_ASPTN</name>
<sequence length="195" mass="21157">MSSTLETLNLSHIPLPVHVALYRDVQNAPFLRQQLISGNADFEYAFIDASMVLSRSHALSAVFRAINDYLNQRLKSRNVHSETVFSFSPNNNIADSFRRFGISDSTKDLLVVKVSVTPDVTHESVAAHLAQSVEGTPVPFDDETLSGISDIAKIKKAYKLGALSSAPSDKADGTNGEDRRLELSVIGAIALRGAT</sequence>
<keyword id="KW-0010">Activator</keyword>
<keyword id="KW-0158">Chromosome</keyword>
<keyword id="KW-0539">Nucleus</keyword>
<keyword id="KW-1185">Reference proteome</keyword>
<keyword id="KW-0779">Telomere</keyword>
<keyword id="KW-0804">Transcription</keyword>
<keyword id="KW-0805">Transcription regulation</keyword>
<keyword id="KW-0819">tRNA processing</keyword>
<organism>
    <name type="scientific">Aspergillus terreus (strain NIH 2624 / FGSC A1156)</name>
    <dbReference type="NCBI Taxonomy" id="341663"/>
    <lineage>
        <taxon>Eukaryota</taxon>
        <taxon>Fungi</taxon>
        <taxon>Dikarya</taxon>
        <taxon>Ascomycota</taxon>
        <taxon>Pezizomycotina</taxon>
        <taxon>Eurotiomycetes</taxon>
        <taxon>Eurotiomycetidae</taxon>
        <taxon>Eurotiales</taxon>
        <taxon>Aspergillaceae</taxon>
        <taxon>Aspergillus</taxon>
        <taxon>Aspergillus subgen. Circumdati</taxon>
    </lineage>
</organism>